<gene>
    <name evidence="1" type="primary">rbfA</name>
    <name type="ordered locus">YPN_3239</name>
    <name type="ORF">YP516_3679</name>
</gene>
<comment type="function">
    <text evidence="1">One of several proteins that assist in the late maturation steps of the functional core of the 30S ribosomal subunit. Associates with free 30S ribosomal subunits (but not with 30S subunits that are part of 70S ribosomes or polysomes). Required for efficient processing of 16S rRNA. May interact with the 5'-terminal helix region of 16S rRNA.</text>
</comment>
<comment type="subunit">
    <text evidence="1">Monomer. Binds 30S ribosomal subunits, but not 50S ribosomal subunits or 70S ribosomes.</text>
</comment>
<comment type="subcellular location">
    <subcellularLocation>
        <location evidence="1">Cytoplasm</location>
    </subcellularLocation>
</comment>
<comment type="similarity">
    <text evidence="1">Belongs to the RbfA family.</text>
</comment>
<name>RBFA_YERPN</name>
<accession>Q1CEL4</accession>
<accession>C4GXU6</accession>
<proteinExistence type="inferred from homology"/>
<protein>
    <recommendedName>
        <fullName evidence="1">Ribosome-binding factor A</fullName>
    </recommendedName>
</protein>
<organism>
    <name type="scientific">Yersinia pestis bv. Antiqua (strain Nepal516)</name>
    <dbReference type="NCBI Taxonomy" id="377628"/>
    <lineage>
        <taxon>Bacteria</taxon>
        <taxon>Pseudomonadati</taxon>
        <taxon>Pseudomonadota</taxon>
        <taxon>Gammaproteobacteria</taxon>
        <taxon>Enterobacterales</taxon>
        <taxon>Yersiniaceae</taxon>
        <taxon>Yersinia</taxon>
    </lineage>
</organism>
<reference key="1">
    <citation type="journal article" date="2006" name="J. Bacteriol.">
        <title>Complete genome sequence of Yersinia pestis strains Antiqua and Nepal516: evidence of gene reduction in an emerging pathogen.</title>
        <authorList>
            <person name="Chain P.S.G."/>
            <person name="Hu P."/>
            <person name="Malfatti S.A."/>
            <person name="Radnedge L."/>
            <person name="Larimer F."/>
            <person name="Vergez L.M."/>
            <person name="Worsham P."/>
            <person name="Chu M.C."/>
            <person name="Andersen G.L."/>
        </authorList>
    </citation>
    <scope>NUCLEOTIDE SEQUENCE [LARGE SCALE GENOMIC DNA]</scope>
    <source>
        <strain>Nepal516</strain>
    </source>
</reference>
<reference key="2">
    <citation type="submission" date="2009-04" db="EMBL/GenBank/DDBJ databases">
        <title>Yersinia pestis Nepal516A whole genome shotgun sequencing project.</title>
        <authorList>
            <person name="Plunkett G. III"/>
            <person name="Anderson B.D."/>
            <person name="Baumler D.J."/>
            <person name="Burland V."/>
            <person name="Cabot E.L."/>
            <person name="Glasner J.D."/>
            <person name="Mau B."/>
            <person name="Neeno-Eckwall E."/>
            <person name="Perna N.T."/>
            <person name="Munk A.C."/>
            <person name="Tapia R."/>
            <person name="Green L.D."/>
            <person name="Rogers Y.C."/>
            <person name="Detter J.C."/>
            <person name="Bruce D.C."/>
            <person name="Brettin T.S."/>
        </authorList>
    </citation>
    <scope>NUCLEOTIDE SEQUENCE [LARGE SCALE GENOMIC DNA]</scope>
    <source>
        <strain>Nepal516</strain>
    </source>
</reference>
<dbReference type="EMBL" id="CP000305">
    <property type="protein sequence ID" value="ABG19566.1"/>
    <property type="molecule type" value="Genomic_DNA"/>
</dbReference>
<dbReference type="EMBL" id="ACNQ01000017">
    <property type="protein sequence ID" value="EEO75746.1"/>
    <property type="molecule type" value="Genomic_DNA"/>
</dbReference>
<dbReference type="RefSeq" id="WP_002209255.1">
    <property type="nucleotide sequence ID" value="NZ_ACNQ01000017.1"/>
</dbReference>
<dbReference type="SMR" id="Q1CEL4"/>
<dbReference type="GeneID" id="96663988"/>
<dbReference type="KEGG" id="ypn:YPN_3239"/>
<dbReference type="HOGENOM" id="CLU_089475_5_0_6"/>
<dbReference type="Proteomes" id="UP000008936">
    <property type="component" value="Chromosome"/>
</dbReference>
<dbReference type="GO" id="GO:0005829">
    <property type="term" value="C:cytosol"/>
    <property type="evidence" value="ECO:0007669"/>
    <property type="project" value="TreeGrafter"/>
</dbReference>
<dbReference type="GO" id="GO:0043024">
    <property type="term" value="F:ribosomal small subunit binding"/>
    <property type="evidence" value="ECO:0007669"/>
    <property type="project" value="TreeGrafter"/>
</dbReference>
<dbReference type="GO" id="GO:0030490">
    <property type="term" value="P:maturation of SSU-rRNA"/>
    <property type="evidence" value="ECO:0007669"/>
    <property type="project" value="UniProtKB-UniRule"/>
</dbReference>
<dbReference type="FunFam" id="3.30.300.20:FF:000007">
    <property type="entry name" value="Ribosome-binding factor A"/>
    <property type="match status" value="1"/>
</dbReference>
<dbReference type="Gene3D" id="3.30.300.20">
    <property type="match status" value="1"/>
</dbReference>
<dbReference type="HAMAP" id="MF_00003">
    <property type="entry name" value="RbfA"/>
    <property type="match status" value="1"/>
</dbReference>
<dbReference type="InterPro" id="IPR015946">
    <property type="entry name" value="KH_dom-like_a/b"/>
</dbReference>
<dbReference type="InterPro" id="IPR000238">
    <property type="entry name" value="RbfA"/>
</dbReference>
<dbReference type="InterPro" id="IPR023799">
    <property type="entry name" value="RbfA_dom_sf"/>
</dbReference>
<dbReference type="InterPro" id="IPR020053">
    <property type="entry name" value="Ribosome-bd_factorA_CS"/>
</dbReference>
<dbReference type="NCBIfam" id="TIGR00082">
    <property type="entry name" value="rbfA"/>
    <property type="match status" value="1"/>
</dbReference>
<dbReference type="PANTHER" id="PTHR33515">
    <property type="entry name" value="RIBOSOME-BINDING FACTOR A, CHLOROPLASTIC-RELATED"/>
    <property type="match status" value="1"/>
</dbReference>
<dbReference type="PANTHER" id="PTHR33515:SF1">
    <property type="entry name" value="RIBOSOME-BINDING FACTOR A, CHLOROPLASTIC-RELATED"/>
    <property type="match status" value="1"/>
</dbReference>
<dbReference type="Pfam" id="PF02033">
    <property type="entry name" value="RBFA"/>
    <property type="match status" value="1"/>
</dbReference>
<dbReference type="SUPFAM" id="SSF89919">
    <property type="entry name" value="Ribosome-binding factor A, RbfA"/>
    <property type="match status" value="1"/>
</dbReference>
<dbReference type="PROSITE" id="PS01319">
    <property type="entry name" value="RBFA"/>
    <property type="match status" value="1"/>
</dbReference>
<keyword id="KW-0963">Cytoplasm</keyword>
<keyword id="KW-0690">Ribosome biogenesis</keyword>
<evidence type="ECO:0000255" key="1">
    <source>
        <dbReference type="HAMAP-Rule" id="MF_00003"/>
    </source>
</evidence>
<sequence>MAKEFSRSQRVSQEMQKEIALILQREIKDPRVGMATVSGIELSRDLAYAKVFVTFLNVLTDNADPDTVKNGIKALQDASGYIRTLLGKAMRLRIVPELTFAYDNSLIEGMRMSNLVSNVIKNDVERQVNPGSDEEK</sequence>
<feature type="chain" id="PRO_1000000249" description="Ribosome-binding factor A">
    <location>
        <begin position="1"/>
        <end position="136"/>
    </location>
</feature>